<protein>
    <recommendedName>
        <fullName>Homeobox protein CDX-1</fullName>
    </recommendedName>
    <alternativeName>
        <fullName>Caudal-type homeobox protein 1</fullName>
    </alternativeName>
</protein>
<reference key="1">
    <citation type="journal article" date="1995" name="Genomics">
        <title>Isolation, characterization, and precise physical localization of human CDX1, a caudal-type homeobox gene.</title>
        <authorList>
            <person name="Bonner C.A."/>
            <person name="Lofus S.K."/>
            <person name="Wasmuth J.J."/>
        </authorList>
    </citation>
    <scope>NUCLEOTIDE SEQUENCE [GENOMIC DNA / MRNA] (ISOFORM 1)</scope>
    <source>
        <tissue>Small intestine</tissue>
    </source>
</reference>
<reference key="2">
    <citation type="journal article" date="1997" name="Int. J. Cancer">
        <title>Molecular cloning, sequencing and expression of the mRNA encoding human Cdx1 and Cdx2 homeobox. Down-regulation of Cdx1 and Cdx2 mRNA expression during colorectal carcinogenesis.</title>
        <authorList>
            <person name="Mallo G.V."/>
            <person name="Rechreche H."/>
            <person name="Frigerio J.-M."/>
            <person name="Rocha D."/>
            <person name="Zweibaum A."/>
            <person name="Lacasa M."/>
            <person name="Jordan B.R."/>
            <person name="Dusetti N.J."/>
            <person name="Dagorn J.-C."/>
            <person name="Iovanna J.L."/>
        </authorList>
    </citation>
    <scope>NUCLEOTIDE SEQUENCE [MRNA] (ISOFORM 1)</scope>
    <source>
        <tissue>Colon carcinoma</tissue>
    </source>
</reference>
<reference key="3">
    <citation type="submission" date="2000-02" db="EMBL/GenBank/DDBJ databases">
        <title>Molecular cloning and sequencing of the human CDX1 homeobox gene.</title>
        <authorList>
            <person name="Malakooti J."/>
        </authorList>
    </citation>
    <scope>NUCLEOTIDE SEQUENCE [MRNA] (ISOFORM 1)</scope>
</reference>
<reference key="4">
    <citation type="journal article" date="2004" name="Genome Res.">
        <title>The status, quality, and expansion of the NIH full-length cDNA project: the Mammalian Gene Collection (MGC).</title>
        <authorList>
            <consortium name="The MGC Project Team"/>
        </authorList>
    </citation>
    <scope>NUCLEOTIDE SEQUENCE [LARGE SCALE MRNA] (ISOFORM 2)</scope>
</reference>
<reference key="5">
    <citation type="journal article" date="2014" name="Elife">
        <title>A KRAS-directed transcriptional silencing pathway that mediates the CpG island methylator phenotype.</title>
        <authorList>
            <person name="Serra R.W."/>
            <person name="Fang M."/>
            <person name="Park S.M."/>
            <person name="Hutchinson L."/>
            <person name="Green M.R."/>
        </authorList>
    </citation>
    <scope>FUNCTION</scope>
    <scope>DNA-BINDING</scope>
</reference>
<reference evidence="8" key="6">
    <citation type="journal article" date="2017" name="Science">
        <title>Impact of cytosine methylation on DNA binding specificities of human transcription factors.</title>
        <authorList>
            <person name="Yin Y."/>
            <person name="Morgunova E."/>
            <person name="Jolma A."/>
            <person name="Kaasinen E."/>
            <person name="Sahu B."/>
            <person name="Khund-Sayeed S."/>
            <person name="Das P.K."/>
            <person name="Kivioja T."/>
            <person name="Dave K."/>
            <person name="Zhong F."/>
            <person name="Nitta K.R."/>
            <person name="Taipale M."/>
            <person name="Popov A."/>
            <person name="Ginno P.A."/>
            <person name="Domcke S."/>
            <person name="Yan J."/>
            <person name="Schubeler D."/>
            <person name="Vinson C."/>
            <person name="Taipale J."/>
        </authorList>
    </citation>
    <scope>X-RAY CRYSTALLOGRAPHY (3.23 ANGSTROMS) OF 153-215 IN COMPLEX WITH METHYLATED DNA</scope>
    <scope>DNA-BINDING</scope>
</reference>
<organism>
    <name type="scientific">Homo sapiens</name>
    <name type="common">Human</name>
    <dbReference type="NCBI Taxonomy" id="9606"/>
    <lineage>
        <taxon>Eukaryota</taxon>
        <taxon>Metazoa</taxon>
        <taxon>Chordata</taxon>
        <taxon>Craniata</taxon>
        <taxon>Vertebrata</taxon>
        <taxon>Euteleostomi</taxon>
        <taxon>Mammalia</taxon>
        <taxon>Eutheria</taxon>
        <taxon>Euarchontoglires</taxon>
        <taxon>Primates</taxon>
        <taxon>Haplorrhini</taxon>
        <taxon>Catarrhini</taxon>
        <taxon>Hominidae</taxon>
        <taxon>Homo</taxon>
    </lineage>
</organism>
<evidence type="ECO:0000255" key="1">
    <source>
        <dbReference type="PROSITE-ProRule" id="PRU00108"/>
    </source>
</evidence>
<evidence type="ECO:0000256" key="2">
    <source>
        <dbReference type="SAM" id="MobiDB-lite"/>
    </source>
</evidence>
<evidence type="ECO:0000269" key="3">
    <source>
    </source>
</evidence>
<evidence type="ECO:0000269" key="4">
    <source>
    </source>
</evidence>
<evidence type="ECO:0000303" key="5">
    <source>
    </source>
</evidence>
<evidence type="ECO:0000305" key="6"/>
<evidence type="ECO:0000305" key="7">
    <source>
    </source>
</evidence>
<evidence type="ECO:0007744" key="8">
    <source>
        <dbReference type="PDB" id="5LUX"/>
    </source>
</evidence>
<evidence type="ECO:0007829" key="9">
    <source>
        <dbReference type="PDB" id="7Q3O"/>
    </source>
</evidence>
<keyword id="KW-0002">3D-structure</keyword>
<keyword id="KW-0010">Activator</keyword>
<keyword id="KW-0025">Alternative splicing</keyword>
<keyword id="KW-0217">Developmental protein</keyword>
<keyword id="KW-0238">DNA-binding</keyword>
<keyword id="KW-0371">Homeobox</keyword>
<keyword id="KW-0539">Nucleus</keyword>
<keyword id="KW-1267">Proteomics identification</keyword>
<keyword id="KW-1185">Reference proteome</keyword>
<keyword id="KW-0804">Transcription</keyword>
<keyword id="KW-0805">Transcription regulation</keyword>
<feature type="chain" id="PRO_0000048846" description="Homeobox protein CDX-1">
    <location>
        <begin position="1"/>
        <end position="265"/>
    </location>
</feature>
<feature type="DNA-binding region" description="Homeobox" evidence="1">
    <location>
        <begin position="154"/>
        <end position="213"/>
    </location>
</feature>
<feature type="region of interest" description="Disordered" evidence="2">
    <location>
        <begin position="9"/>
        <end position="153"/>
    </location>
</feature>
<feature type="region of interest" description="Interaction with DNA" evidence="7">
    <location>
        <begin position="157"/>
        <end position="178"/>
    </location>
</feature>
<feature type="region of interest" description="Interaction with 5-mCpG DNA" evidence="7">
    <location>
        <begin position="196"/>
        <end position="207"/>
    </location>
</feature>
<feature type="region of interest" description="Disordered" evidence="2">
    <location>
        <begin position="207"/>
        <end position="265"/>
    </location>
</feature>
<feature type="compositionally biased region" description="Pro residues" evidence="2">
    <location>
        <begin position="30"/>
        <end position="42"/>
    </location>
</feature>
<feature type="compositionally biased region" description="Low complexity" evidence="2">
    <location>
        <begin position="73"/>
        <end position="92"/>
    </location>
</feature>
<feature type="compositionally biased region" description="Pro residues" evidence="2">
    <location>
        <begin position="93"/>
        <end position="108"/>
    </location>
</feature>
<feature type="compositionally biased region" description="Low complexity" evidence="2">
    <location>
        <begin position="110"/>
        <end position="126"/>
    </location>
</feature>
<feature type="compositionally biased region" description="Basic residues" evidence="2">
    <location>
        <begin position="207"/>
        <end position="217"/>
    </location>
</feature>
<feature type="compositionally biased region" description="Polar residues" evidence="2">
    <location>
        <begin position="245"/>
        <end position="256"/>
    </location>
</feature>
<feature type="splice variant" id="VSP_021030" description="In isoform 2." evidence="5">
    <location>
        <begin position="1"/>
        <end position="135"/>
    </location>
</feature>
<feature type="sequence variant" id="VAR_020149" description="In dbSNP:rs2302275.">
    <original>P</original>
    <variation>R</variation>
    <location>
        <position position="130"/>
    </location>
</feature>
<feature type="sequence conflict" description="In Ref. 1; AAA80284/AAC50237 and 2; AAB40602." evidence="6" ref="1 2">
    <original>QA</original>
    <variation>AN</variation>
    <location>
        <begin position="28"/>
        <end position="29"/>
    </location>
</feature>
<feature type="strand" evidence="9">
    <location>
        <begin position="154"/>
        <end position="158"/>
    </location>
</feature>
<feature type="helix" evidence="9">
    <location>
        <begin position="163"/>
        <end position="175"/>
    </location>
</feature>
<feature type="helix" evidence="9">
    <location>
        <begin position="181"/>
        <end position="189"/>
    </location>
</feature>
<feature type="turn" evidence="9">
    <location>
        <begin position="190"/>
        <end position="192"/>
    </location>
</feature>
<feature type="helix" evidence="9">
    <location>
        <begin position="195"/>
        <end position="210"/>
    </location>
</feature>
<accession>P47902</accession>
<accession>Q4VAU4</accession>
<accession>Q9NYK8</accession>
<name>CDX1_HUMAN</name>
<sequence>MYVGYVLDKDSPVYPGPARPASLGLGPQAYGPPAPPPAPPQYPDFSSYSHVEPAPAPPTAWGAPFPAPKDDWAAAYGPGPAAPAASPASLAFGPPPDFSPVPAPPGPGPGLLAQPLGGPGTPSSPGAQRPTPYEWMRRSVAAGGGGGSGKTRTKDKYRVVYTDHQRLELEKEFHYSRYITIRRKSELAANLGLTERQVKIWFQNRRAKERKVNKKKQQQQQPPQPPMAHDITATPAGPSLGGLCPSNTSLLATSSPMPVKEEFLP</sequence>
<gene>
    <name type="primary">CDX1</name>
</gene>
<comment type="function">
    <text evidence="3 4">Plays a role in transcriptional regulation (PubMed:24623306). Involved in activated KRAS-mediated transcriptional activation of PRKD1 in colorectal cancer (CRC) cells (PubMed:24623306). Binds to the PRKD1 promoter in colorectal cancer (CRC) cells (PubMed:24623306). Could play a role in the terminal differentiation of the intestine. Binds preferentially to methylated DNA (PubMed:28473536).</text>
</comment>
<comment type="interaction">
    <interactant intactId="EBI-8514176">
        <id>P47902</id>
    </interactant>
    <interactant intactId="EBI-1172054">
        <id>P49715</id>
        <label>CEBPA</label>
    </interactant>
    <organismsDiffer>false</organismsDiffer>
    <experiments>3</experiments>
</comment>
<comment type="subcellular location">
    <subcellularLocation>
        <location>Nucleus</location>
    </subcellularLocation>
</comment>
<comment type="alternative products">
    <event type="alternative splicing"/>
    <isoform>
        <id>P47902-1</id>
        <name>1</name>
        <sequence type="displayed"/>
    </isoform>
    <isoform>
        <id>P47902-2</id>
        <name>2</name>
        <sequence type="described" ref="VSP_021030"/>
    </isoform>
</comment>
<comment type="tissue specificity">
    <text>Intestinal epithelium.</text>
</comment>
<comment type="similarity">
    <text evidence="6">Belongs to the Caudal homeobox family.</text>
</comment>
<dbReference type="EMBL" id="U16360">
    <property type="protein sequence ID" value="AAA80284.1"/>
    <property type="molecule type" value="Genomic_DNA"/>
</dbReference>
<dbReference type="EMBL" id="U15212">
    <property type="protein sequence ID" value="AAC50237.1"/>
    <property type="molecule type" value="mRNA"/>
</dbReference>
<dbReference type="EMBL" id="U51095">
    <property type="protein sequence ID" value="AAB40602.1"/>
    <property type="molecule type" value="mRNA"/>
</dbReference>
<dbReference type="EMBL" id="AF239666">
    <property type="protein sequence ID" value="AAF61234.1"/>
    <property type="molecule type" value="mRNA"/>
</dbReference>
<dbReference type="EMBL" id="BC096251">
    <property type="protein sequence ID" value="AAH96251.1"/>
    <property type="molecule type" value="mRNA"/>
</dbReference>
<dbReference type="CCDS" id="CCDS4304.1">
    <molecule id="P47902-1"/>
</dbReference>
<dbReference type="PIR" id="I38868">
    <property type="entry name" value="I38868"/>
</dbReference>
<dbReference type="PIR" id="I38881">
    <property type="entry name" value="I38881"/>
</dbReference>
<dbReference type="RefSeq" id="NP_001795.2">
    <molecule id="P47902-1"/>
    <property type="nucleotide sequence ID" value="NM_001804.3"/>
</dbReference>
<dbReference type="PDB" id="5LUX">
    <property type="method" value="X-ray"/>
    <property type="resolution" value="3.23 A"/>
    <property type="chains" value="K/L=153-215"/>
</dbReference>
<dbReference type="PDB" id="7Q3O">
    <property type="method" value="X-ray"/>
    <property type="resolution" value="2.78 A"/>
    <property type="chains" value="C/E/G/K=151-215"/>
</dbReference>
<dbReference type="PDBsum" id="5LUX"/>
<dbReference type="PDBsum" id="7Q3O"/>
<dbReference type="SMR" id="P47902"/>
<dbReference type="BioGRID" id="107474">
    <property type="interactions" value="74"/>
</dbReference>
<dbReference type="ELM" id="P47902"/>
<dbReference type="FunCoup" id="P47902">
    <property type="interactions" value="484"/>
</dbReference>
<dbReference type="IntAct" id="P47902">
    <property type="interactions" value="71"/>
</dbReference>
<dbReference type="MINT" id="P47902"/>
<dbReference type="STRING" id="9606.ENSP00000231656"/>
<dbReference type="GlyGen" id="P47902">
    <property type="glycosylation" value="3 sites, 1 O-linked glycan (2 sites)"/>
</dbReference>
<dbReference type="iPTMnet" id="P47902"/>
<dbReference type="PhosphoSitePlus" id="P47902"/>
<dbReference type="BioMuta" id="CDX1"/>
<dbReference type="DMDM" id="116241291"/>
<dbReference type="MassIVE" id="P47902"/>
<dbReference type="PaxDb" id="9606-ENSP00000231656"/>
<dbReference type="PeptideAtlas" id="P47902"/>
<dbReference type="ProteomicsDB" id="55820">
    <molecule id="P47902-1"/>
</dbReference>
<dbReference type="ProteomicsDB" id="55821">
    <molecule id="P47902-2"/>
</dbReference>
<dbReference type="Antibodypedia" id="27929">
    <property type="antibodies" value="507 antibodies from 33 providers"/>
</dbReference>
<dbReference type="DNASU" id="1044"/>
<dbReference type="Ensembl" id="ENST00000231656.13">
    <molecule id="P47902-1"/>
    <property type="protein sequence ID" value="ENSP00000231656.7"/>
    <property type="gene ID" value="ENSG00000113722.18"/>
</dbReference>
<dbReference type="GeneID" id="1044"/>
<dbReference type="KEGG" id="hsa:1044"/>
<dbReference type="MANE-Select" id="ENST00000231656.13">
    <property type="protein sequence ID" value="ENSP00000231656.7"/>
    <property type="RefSeq nucleotide sequence ID" value="NM_001804.3"/>
    <property type="RefSeq protein sequence ID" value="NP_001795.2"/>
</dbReference>
<dbReference type="UCSC" id="uc003lrq.4">
    <molecule id="P47902-1"/>
    <property type="organism name" value="human"/>
</dbReference>
<dbReference type="AGR" id="HGNC:1805"/>
<dbReference type="CTD" id="1044"/>
<dbReference type="DisGeNET" id="1044"/>
<dbReference type="GeneCards" id="CDX1"/>
<dbReference type="HGNC" id="HGNC:1805">
    <property type="gene designation" value="CDX1"/>
</dbReference>
<dbReference type="HPA" id="ENSG00000113722">
    <property type="expression patterns" value="Tissue enriched (intestine)"/>
</dbReference>
<dbReference type="MalaCards" id="CDX1"/>
<dbReference type="MIM" id="600746">
    <property type="type" value="gene"/>
</dbReference>
<dbReference type="neXtProt" id="NX_P47902"/>
<dbReference type="OpenTargets" id="ENSG00000113722"/>
<dbReference type="PharmGKB" id="PA26351"/>
<dbReference type="VEuPathDB" id="HostDB:ENSG00000113722"/>
<dbReference type="eggNOG" id="KOG0848">
    <property type="taxonomic scope" value="Eukaryota"/>
</dbReference>
<dbReference type="GeneTree" id="ENSGT00940000162069"/>
<dbReference type="HOGENOM" id="CLU_073177_1_0_1"/>
<dbReference type="InParanoid" id="P47902"/>
<dbReference type="OMA" id="DLHHGQP"/>
<dbReference type="OrthoDB" id="6159439at2759"/>
<dbReference type="PAN-GO" id="P47902">
    <property type="GO annotations" value="8 GO annotations based on evolutionary models"/>
</dbReference>
<dbReference type="PhylomeDB" id="P47902"/>
<dbReference type="TreeFam" id="TF351605"/>
<dbReference type="PathwayCommons" id="P47902"/>
<dbReference type="SignaLink" id="P47902"/>
<dbReference type="SIGNOR" id="P47902"/>
<dbReference type="BioGRID-ORCS" id="1044">
    <property type="hits" value="7 hits in 1163 CRISPR screens"/>
</dbReference>
<dbReference type="GeneWiki" id="CDX1"/>
<dbReference type="GenomeRNAi" id="1044"/>
<dbReference type="Pharos" id="P47902">
    <property type="development level" value="Tbio"/>
</dbReference>
<dbReference type="PRO" id="PR:P47902"/>
<dbReference type="Proteomes" id="UP000005640">
    <property type="component" value="Chromosome 5"/>
</dbReference>
<dbReference type="RNAct" id="P47902">
    <property type="molecule type" value="protein"/>
</dbReference>
<dbReference type="Bgee" id="ENSG00000113722">
    <property type="expression patterns" value="Expressed in mucosa of transverse colon and 106 other cell types or tissues"/>
</dbReference>
<dbReference type="ExpressionAtlas" id="P47902">
    <property type="expression patterns" value="baseline and differential"/>
</dbReference>
<dbReference type="GO" id="GO:0000785">
    <property type="term" value="C:chromatin"/>
    <property type="evidence" value="ECO:0000247"/>
    <property type="project" value="NTNU_SB"/>
</dbReference>
<dbReference type="GO" id="GO:0005634">
    <property type="term" value="C:nucleus"/>
    <property type="evidence" value="ECO:0000318"/>
    <property type="project" value="GO_Central"/>
</dbReference>
<dbReference type="GO" id="GO:0001228">
    <property type="term" value="F:DNA-binding transcription activator activity, RNA polymerase II-specific"/>
    <property type="evidence" value="ECO:0000314"/>
    <property type="project" value="NTNU_SB"/>
</dbReference>
<dbReference type="GO" id="GO:0003700">
    <property type="term" value="F:DNA-binding transcription factor activity"/>
    <property type="evidence" value="ECO:0000318"/>
    <property type="project" value="GO_Central"/>
</dbReference>
<dbReference type="GO" id="GO:0000981">
    <property type="term" value="F:DNA-binding transcription factor activity, RNA polymerase II-specific"/>
    <property type="evidence" value="ECO:0000247"/>
    <property type="project" value="NTNU_SB"/>
</dbReference>
<dbReference type="GO" id="GO:0008327">
    <property type="term" value="F:methyl-CpG binding"/>
    <property type="evidence" value="ECO:0000314"/>
    <property type="project" value="UniProtKB"/>
</dbReference>
<dbReference type="GO" id="GO:0000978">
    <property type="term" value="F:RNA polymerase II cis-regulatory region sequence-specific DNA binding"/>
    <property type="evidence" value="ECO:0000314"/>
    <property type="project" value="NTNU_SB"/>
</dbReference>
<dbReference type="GO" id="GO:0000977">
    <property type="term" value="F:RNA polymerase II transcription regulatory region sequence-specific DNA binding"/>
    <property type="evidence" value="ECO:0000318"/>
    <property type="project" value="GO_Central"/>
</dbReference>
<dbReference type="GO" id="GO:1990837">
    <property type="term" value="F:sequence-specific double-stranded DNA binding"/>
    <property type="evidence" value="ECO:0000314"/>
    <property type="project" value="ARUK-UCL"/>
</dbReference>
<dbReference type="GO" id="GO:0000976">
    <property type="term" value="F:transcription cis-regulatory region binding"/>
    <property type="evidence" value="ECO:0000314"/>
    <property type="project" value="UniProtKB"/>
</dbReference>
<dbReference type="GO" id="GO:0009887">
    <property type="term" value="P:animal organ morphogenesis"/>
    <property type="evidence" value="ECO:0000304"/>
    <property type="project" value="ProtInc"/>
</dbReference>
<dbReference type="GO" id="GO:0009948">
    <property type="term" value="P:anterior/posterior axis specification"/>
    <property type="evidence" value="ECO:0000318"/>
    <property type="project" value="GO_Central"/>
</dbReference>
<dbReference type="GO" id="GO:0060349">
    <property type="term" value="P:bone morphogenesis"/>
    <property type="evidence" value="ECO:0007669"/>
    <property type="project" value="Ensembl"/>
</dbReference>
<dbReference type="GO" id="GO:0030154">
    <property type="term" value="P:cell differentiation"/>
    <property type="evidence" value="ECO:0000318"/>
    <property type="project" value="GO_Central"/>
</dbReference>
<dbReference type="GO" id="GO:0048565">
    <property type="term" value="P:digestive tract development"/>
    <property type="evidence" value="ECO:0000318"/>
    <property type="project" value="GO_Central"/>
</dbReference>
<dbReference type="GO" id="GO:0009880">
    <property type="term" value="P:embryonic pattern specification"/>
    <property type="evidence" value="ECO:0000318"/>
    <property type="project" value="GO_Central"/>
</dbReference>
<dbReference type="GO" id="GO:0045944">
    <property type="term" value="P:positive regulation of transcription by RNA polymerase II"/>
    <property type="evidence" value="ECO:0000314"/>
    <property type="project" value="NTNU_SB"/>
</dbReference>
<dbReference type="GO" id="GO:0014807">
    <property type="term" value="P:regulation of somitogenesis"/>
    <property type="evidence" value="ECO:0000250"/>
    <property type="project" value="UniProtKB"/>
</dbReference>
<dbReference type="GO" id="GO:0006357">
    <property type="term" value="P:regulation of transcription by RNA polymerase II"/>
    <property type="evidence" value="ECO:0000318"/>
    <property type="project" value="GO_Central"/>
</dbReference>
<dbReference type="CDD" id="cd00086">
    <property type="entry name" value="homeodomain"/>
    <property type="match status" value="1"/>
</dbReference>
<dbReference type="FunFam" id="1.10.10.60:FF:000089">
    <property type="entry name" value="Caudal type homeobox 4"/>
    <property type="match status" value="1"/>
</dbReference>
<dbReference type="Gene3D" id="1.10.10.60">
    <property type="entry name" value="Homeodomain-like"/>
    <property type="match status" value="1"/>
</dbReference>
<dbReference type="InterPro" id="IPR006820">
    <property type="entry name" value="Caudal_activation_dom"/>
</dbReference>
<dbReference type="InterPro" id="IPR047152">
    <property type="entry name" value="Caudal_homeobox"/>
</dbReference>
<dbReference type="InterPro" id="IPR001356">
    <property type="entry name" value="HD"/>
</dbReference>
<dbReference type="InterPro" id="IPR020479">
    <property type="entry name" value="HD_metazoa"/>
</dbReference>
<dbReference type="InterPro" id="IPR017970">
    <property type="entry name" value="Homeobox_CS"/>
</dbReference>
<dbReference type="InterPro" id="IPR009057">
    <property type="entry name" value="Homeodomain-like_sf"/>
</dbReference>
<dbReference type="InterPro" id="IPR000047">
    <property type="entry name" value="HTH_motif"/>
</dbReference>
<dbReference type="PANTHER" id="PTHR24332">
    <property type="entry name" value="HOMEOBOX PROTEIN CDX"/>
    <property type="match status" value="1"/>
</dbReference>
<dbReference type="PANTHER" id="PTHR24332:SF16">
    <property type="entry name" value="HOMEOBOX PROTEIN CDX-1"/>
    <property type="match status" value="1"/>
</dbReference>
<dbReference type="Pfam" id="PF04731">
    <property type="entry name" value="Caudal_act"/>
    <property type="match status" value="1"/>
</dbReference>
<dbReference type="Pfam" id="PF00046">
    <property type="entry name" value="Homeodomain"/>
    <property type="match status" value="1"/>
</dbReference>
<dbReference type="PRINTS" id="PR00024">
    <property type="entry name" value="HOMEOBOX"/>
</dbReference>
<dbReference type="PRINTS" id="PR00031">
    <property type="entry name" value="HTHREPRESSR"/>
</dbReference>
<dbReference type="SMART" id="SM00389">
    <property type="entry name" value="HOX"/>
    <property type="match status" value="1"/>
</dbReference>
<dbReference type="SUPFAM" id="SSF46689">
    <property type="entry name" value="Homeodomain-like"/>
    <property type="match status" value="1"/>
</dbReference>
<dbReference type="PROSITE" id="PS00027">
    <property type="entry name" value="HOMEOBOX_1"/>
    <property type="match status" value="1"/>
</dbReference>
<dbReference type="PROSITE" id="PS50071">
    <property type="entry name" value="HOMEOBOX_2"/>
    <property type="match status" value="1"/>
</dbReference>
<proteinExistence type="evidence at protein level"/>